<proteinExistence type="inferred from homology"/>
<name>RL30_HISS1</name>
<evidence type="ECO:0000255" key="1">
    <source>
        <dbReference type="HAMAP-Rule" id="MF_01371"/>
    </source>
</evidence>
<evidence type="ECO:0000305" key="2"/>
<dbReference type="EMBL" id="CP000436">
    <property type="protein sequence ID" value="ABI24359.1"/>
    <property type="status" value="ALT_INIT"/>
    <property type="molecule type" value="Genomic_DNA"/>
</dbReference>
<dbReference type="SMR" id="Q0I144"/>
<dbReference type="KEGG" id="hso:HS_0078"/>
<dbReference type="eggNOG" id="COG1841">
    <property type="taxonomic scope" value="Bacteria"/>
</dbReference>
<dbReference type="HOGENOM" id="CLU_131047_1_4_6"/>
<dbReference type="GO" id="GO:0022625">
    <property type="term" value="C:cytosolic large ribosomal subunit"/>
    <property type="evidence" value="ECO:0007669"/>
    <property type="project" value="TreeGrafter"/>
</dbReference>
<dbReference type="GO" id="GO:0003735">
    <property type="term" value="F:structural constituent of ribosome"/>
    <property type="evidence" value="ECO:0007669"/>
    <property type="project" value="InterPro"/>
</dbReference>
<dbReference type="GO" id="GO:0006412">
    <property type="term" value="P:translation"/>
    <property type="evidence" value="ECO:0007669"/>
    <property type="project" value="UniProtKB-UniRule"/>
</dbReference>
<dbReference type="CDD" id="cd01658">
    <property type="entry name" value="Ribosomal_L30"/>
    <property type="match status" value="1"/>
</dbReference>
<dbReference type="FunFam" id="3.30.1390.20:FF:000001">
    <property type="entry name" value="50S ribosomal protein L30"/>
    <property type="match status" value="1"/>
</dbReference>
<dbReference type="Gene3D" id="3.30.1390.20">
    <property type="entry name" value="Ribosomal protein L30, ferredoxin-like fold domain"/>
    <property type="match status" value="1"/>
</dbReference>
<dbReference type="HAMAP" id="MF_01371_B">
    <property type="entry name" value="Ribosomal_uL30_B"/>
    <property type="match status" value="1"/>
</dbReference>
<dbReference type="InterPro" id="IPR036919">
    <property type="entry name" value="Ribo_uL30_ferredoxin-like_sf"/>
</dbReference>
<dbReference type="InterPro" id="IPR005996">
    <property type="entry name" value="Ribosomal_uL30_bac-type"/>
</dbReference>
<dbReference type="InterPro" id="IPR018038">
    <property type="entry name" value="Ribosomal_uL30_CS"/>
</dbReference>
<dbReference type="InterPro" id="IPR016082">
    <property type="entry name" value="Ribosomal_uL30_ferredoxin-like"/>
</dbReference>
<dbReference type="NCBIfam" id="TIGR01308">
    <property type="entry name" value="rpmD_bact"/>
    <property type="match status" value="1"/>
</dbReference>
<dbReference type="PANTHER" id="PTHR15892:SF2">
    <property type="entry name" value="LARGE RIBOSOMAL SUBUNIT PROTEIN UL30M"/>
    <property type="match status" value="1"/>
</dbReference>
<dbReference type="PANTHER" id="PTHR15892">
    <property type="entry name" value="MITOCHONDRIAL RIBOSOMAL PROTEIN L30"/>
    <property type="match status" value="1"/>
</dbReference>
<dbReference type="Pfam" id="PF00327">
    <property type="entry name" value="Ribosomal_L30"/>
    <property type="match status" value="1"/>
</dbReference>
<dbReference type="PIRSF" id="PIRSF002211">
    <property type="entry name" value="Ribosomal_L30_bac-type"/>
    <property type="match status" value="1"/>
</dbReference>
<dbReference type="SUPFAM" id="SSF55129">
    <property type="entry name" value="Ribosomal protein L30p/L7e"/>
    <property type="match status" value="1"/>
</dbReference>
<dbReference type="PROSITE" id="PS00634">
    <property type="entry name" value="RIBOSOMAL_L30"/>
    <property type="match status" value="1"/>
</dbReference>
<feature type="chain" id="PRO_0000273796" description="Large ribosomal subunit protein uL30">
    <location>
        <begin position="1"/>
        <end position="59"/>
    </location>
</feature>
<organism>
    <name type="scientific">Histophilus somni (strain 129Pt)</name>
    <name type="common">Haemophilus somnus</name>
    <dbReference type="NCBI Taxonomy" id="205914"/>
    <lineage>
        <taxon>Bacteria</taxon>
        <taxon>Pseudomonadati</taxon>
        <taxon>Pseudomonadota</taxon>
        <taxon>Gammaproteobacteria</taxon>
        <taxon>Pasteurellales</taxon>
        <taxon>Pasteurellaceae</taxon>
        <taxon>Histophilus</taxon>
    </lineage>
</organism>
<protein>
    <recommendedName>
        <fullName evidence="1">Large ribosomal subunit protein uL30</fullName>
    </recommendedName>
    <alternativeName>
        <fullName evidence="2">50S ribosomal protein L30</fullName>
    </alternativeName>
</protein>
<gene>
    <name evidence="1" type="primary">rpmD</name>
    <name type="ordered locus">HS_0078</name>
</gene>
<keyword id="KW-0687">Ribonucleoprotein</keyword>
<keyword id="KW-0689">Ribosomal protein</keyword>
<comment type="subunit">
    <text evidence="1">Part of the 50S ribosomal subunit.</text>
</comment>
<comment type="similarity">
    <text evidence="1">Belongs to the universal ribosomal protein uL30 family.</text>
</comment>
<comment type="sequence caution" evidence="2">
    <conflict type="erroneous initiation">
        <sequence resource="EMBL-CDS" id="ABI24359"/>
    </conflict>
</comment>
<sequence>MAKTIKVTQVRSSIARLPKHKATLRGLGLRRINHTVELIDTPAIRGMINQVSYMVKVEE</sequence>
<accession>Q0I144</accession>
<reference key="1">
    <citation type="journal article" date="2007" name="J. Bacteriol.">
        <title>Complete genome sequence of Haemophilus somnus (Histophilus somni) strain 129Pt and comparison to Haemophilus ducreyi 35000HP and Haemophilus influenzae Rd.</title>
        <authorList>
            <person name="Challacombe J.F."/>
            <person name="Duncan A.J."/>
            <person name="Brettin T.S."/>
            <person name="Bruce D."/>
            <person name="Chertkov O."/>
            <person name="Detter J.C."/>
            <person name="Han C.S."/>
            <person name="Misra M."/>
            <person name="Richardson P."/>
            <person name="Tapia R."/>
            <person name="Thayer N."/>
            <person name="Xie G."/>
            <person name="Inzana T.J."/>
        </authorList>
    </citation>
    <scope>NUCLEOTIDE SEQUENCE [LARGE SCALE GENOMIC DNA]</scope>
    <source>
        <strain>129Pt</strain>
    </source>
</reference>